<keyword id="KW-1064">Adaptive immunity</keyword>
<keyword id="KW-1003">Cell membrane</keyword>
<keyword id="KW-1015">Disulfide bond</keyword>
<keyword id="KW-0391">Immunity</keyword>
<keyword id="KW-1280">Immunoglobulin</keyword>
<keyword id="KW-0393">Immunoglobulin domain</keyword>
<keyword id="KW-0472">Membrane</keyword>
<keyword id="KW-1267">Proteomics identification</keyword>
<keyword id="KW-1185">Reference proteome</keyword>
<keyword id="KW-0964">Secreted</keyword>
<keyword id="KW-0732">Signal</keyword>
<accession>P0DP04</accession>
<feature type="signal peptide" evidence="2">
    <location>
        <begin position="1"/>
        <end position="19"/>
    </location>
</feature>
<feature type="chain" id="PRO_0000439569" description="Immunoglobulin heavy variable 3-43D" evidence="2">
    <location>
        <begin position="20"/>
        <end position="118"/>
    </location>
</feature>
<feature type="domain" description="Ig-like" evidence="3">
    <location>
        <begin position="20"/>
        <end position="118" status="greater than"/>
    </location>
</feature>
<feature type="region of interest" description="Framework-1" evidence="1">
    <location>
        <begin position="20"/>
        <end position="44"/>
    </location>
</feature>
<feature type="region of interest" description="Complementarity-determining-1" evidence="1">
    <location>
        <begin position="45"/>
        <end position="52"/>
    </location>
</feature>
<feature type="region of interest" description="Framework-2" evidence="1">
    <location>
        <begin position="53"/>
        <end position="69"/>
    </location>
</feature>
<feature type="region of interest" description="Complementarity-determining-2" evidence="1">
    <location>
        <begin position="70"/>
        <end position="77"/>
    </location>
</feature>
<feature type="region of interest" description="Framework-3" evidence="1">
    <location>
        <begin position="78"/>
        <end position="115"/>
    </location>
</feature>
<feature type="region of interest" description="Complementarity-determining-3" evidence="1">
    <location>
        <begin position="116"/>
        <end position="118" status="greater than"/>
    </location>
</feature>
<feature type="disulfide bond" evidence="3">
    <location>
        <begin position="41"/>
        <end position="115"/>
    </location>
</feature>
<feature type="non-terminal residue">
    <location>
        <position position="118"/>
    </location>
</feature>
<evidence type="ECO:0000250" key="1">
    <source>
        <dbReference type="UniProtKB" id="P23083"/>
    </source>
</evidence>
<evidence type="ECO:0000255" key="2"/>
<evidence type="ECO:0000255" key="3">
    <source>
        <dbReference type="PROSITE-ProRule" id="PRU00114"/>
    </source>
</evidence>
<evidence type="ECO:0000303" key="4">
    <source>
    </source>
</evidence>
<evidence type="ECO:0000303" key="5">
    <source>
    </source>
</evidence>
<evidence type="ECO:0000303" key="6">
    <source>
    </source>
</evidence>
<evidence type="ECO:0000303" key="7">
    <source>
    </source>
</evidence>
<evidence type="ECO:0000303" key="8">
    <source>
    </source>
</evidence>
<evidence type="ECO:0000303" key="9">
    <source ref="3"/>
</evidence>
<evidence type="ECO:0000305" key="10"/>
<evidence type="ECO:0000305" key="11">
    <source>
    </source>
</evidence>
<comment type="function">
    <text evidence="5 6 7 8">V region of the variable domain of immunoglobulin heavy chains that participates in the antigen recognition (PubMed:24600447). Immunoglobulins, also known as antibodies, are membrane-bound or secreted glycoproteins produced by B lymphocytes. In the recognition phase of humoral immunity, the membrane-bound immunoglobulins serve as receptors which, upon binding of a specific antigen, trigger the clonal expansion and differentiation of B lymphocytes into immunoglobulins-secreting plasma cells. Secreted immunoglobulins mediate the effector phase of humoral immunity, which results in the elimination of bound antigens (PubMed:20176268, PubMed:22158414). The antigen binding site is formed by the variable domain of one heavy chain, together with that of its associated light chain. Thus, each immunoglobulin has two antigen binding sites with remarkable affinity for a particular antigen. The variable domains are assembled by a process called V-(D)-J rearrangement and can then be subjected to somatic hypermutations which, after exposure to antigen and selection, allow affinity maturation for a particular antigen (PubMed:17576170, PubMed:20176268).</text>
</comment>
<comment type="subunit">
    <text evidence="6">Immunoglobulins are composed of two identical heavy chains and two identical light chains; disulfide-linked.</text>
</comment>
<comment type="subcellular location">
    <subcellularLocation>
        <location evidence="6 7">Secreted</location>
    </subcellularLocation>
    <subcellularLocation>
        <location evidence="6 7">Cell membrane</location>
    </subcellularLocation>
</comment>
<comment type="polymorphism">
    <text evidence="10">There are several alleles. The sequence shown is that of IMGT allele IGHV3-43D*01.</text>
</comment>
<comment type="caution">
    <text evidence="10">For examples of full-length immunoglobulin heavy chains (of different isotypes) see AC P0DOX2, AC P0DOX3, AC P0DOX4, AC P0DOX5 and AC P0DOX6.</text>
</comment>
<comment type="caution">
    <text evidence="11">Watson et al. identified this gene on chromosome 14. However, it is not currently present on the reference genome assembly (GRCh38/hg38).</text>
</comment>
<gene>
    <name evidence="4 9" type="primary">IGHV3-43D</name>
</gene>
<sequence>MEFGLSWVFLVAILKGVQCEVQLVESGGVVVQPGGSLRLSCAASGFTFDDYAMHWVRQAPGKGLEWVSLISWDGGSTYYADSVKGRFTISRDNSKNSLYLQMNSLRAEDTALYYCAKD</sequence>
<organism>
    <name type="scientific">Homo sapiens</name>
    <name type="common">Human</name>
    <dbReference type="NCBI Taxonomy" id="9606"/>
    <lineage>
        <taxon>Eukaryota</taxon>
        <taxon>Metazoa</taxon>
        <taxon>Chordata</taxon>
        <taxon>Craniata</taxon>
        <taxon>Vertebrata</taxon>
        <taxon>Euteleostomi</taxon>
        <taxon>Mammalia</taxon>
        <taxon>Eutheria</taxon>
        <taxon>Euarchontoglires</taxon>
        <taxon>Primates</taxon>
        <taxon>Haplorrhini</taxon>
        <taxon>Catarrhini</taxon>
        <taxon>Hominidae</taxon>
        <taxon>Homo</taxon>
    </lineage>
</organism>
<protein>
    <recommendedName>
        <fullName evidence="4 9">Immunoglobulin heavy variable 3-43D</fullName>
    </recommendedName>
</protein>
<proteinExistence type="evidence at protein level"/>
<name>HV43D_HUMAN</name>
<reference key="1">
    <citation type="journal article" date="2013" name="Am. J. Hum. Genet.">
        <title>Complete haplotype sequence of the human immunoglobulin heavy-chain variable, diversity, and joining genes and characterization of allelic and copy-number variation.</title>
        <authorList>
            <person name="Watson C.T."/>
            <person name="Steinberg K.M."/>
            <person name="Huddleston J."/>
            <person name="Warren R.L."/>
            <person name="Malig M."/>
            <person name="Schein J."/>
            <person name="Willsey A.J."/>
            <person name="Joy J.B."/>
            <person name="Scott J.K."/>
            <person name="Graves T.A."/>
            <person name="Wilson R.K."/>
            <person name="Holt R.A."/>
            <person name="Eichler E.E."/>
            <person name="Breden F."/>
        </authorList>
    </citation>
    <scope>NUCLEOTIDE SEQUENCE [GENOMIC DNA] (IMGT ALLELE IGHV3-43D*01)</scope>
</reference>
<reference key="2">
    <citation type="journal article" date="2001" name="Exp. Clin. Immunogenet.">
        <title>Nomenclature of the human immunoglobulin heavy (IGH) genes.</title>
        <authorList>
            <person name="Lefranc M.P."/>
        </authorList>
    </citation>
    <scope>NOMENCLATURE</scope>
</reference>
<reference key="3">
    <citation type="book" date="2001" name="The Immunoglobulin FactsBook.">
        <title>The Immunoglobulin FactsBook.</title>
        <editorList>
            <person name="Lefranc M.P."/>
            <person name="Lefranc G."/>
        </editorList>
        <authorList>
            <person name="Lefranc M.P."/>
            <person name="Lefranc G."/>
        </authorList>
    </citation>
    <scope>NOMENCLATURE</scope>
</reference>
<reference key="4">
    <citation type="journal article" date="2007" name="Annu. Rev. Genet.">
        <title>Immunoglobulin somatic hypermutation.</title>
        <authorList>
            <person name="Teng G."/>
            <person name="Papavasiliou F.N."/>
        </authorList>
    </citation>
    <scope>REVIEW ON SOMATIC HYPERMUTATION</scope>
</reference>
<reference key="5">
    <citation type="journal article" date="2010" name="J. Allergy Clin. Immunol.">
        <title>Structure and function of immunoglobulins.</title>
        <authorList>
            <person name="Schroeder H.W. Jr."/>
            <person name="Cavacini L."/>
        </authorList>
    </citation>
    <scope>REVIEW ON IMMUNOGLOBULINS</scope>
</reference>
<reference key="6">
    <citation type="journal article" date="2012" name="Nat. Rev. Immunol.">
        <title>Molecular programming of B cell memory.</title>
        <authorList>
            <person name="McHeyzer-Williams M."/>
            <person name="Okitsu S."/>
            <person name="Wang N."/>
            <person name="McHeyzer-Williams L."/>
        </authorList>
    </citation>
    <scope>REVIEW ON FUNCTION</scope>
</reference>
<reference key="7">
    <citation type="journal article" date="2014" name="Front. Immunol.">
        <title>Immunoglobulin and T Cell Receptor Genes: IMGT((R)) and the Birth and Rise of Immunoinformatics.</title>
        <authorList>
            <person name="Lefranc M.P."/>
        </authorList>
    </citation>
    <scope>NOMENCLATURE</scope>
</reference>
<dbReference type="EMBL" id="KC713950">
    <property type="protein sequence ID" value="AGI96768.1"/>
    <property type="molecule type" value="Genomic_DNA"/>
</dbReference>
<dbReference type="EMDB" id="EMD-27438"/>
<dbReference type="EMDB" id="EMD-27439"/>
<dbReference type="EMDB" id="EMD-32038"/>
<dbReference type="EMDB" id="EMD-32039"/>
<dbReference type="EMDB" id="EMD-34126"/>
<dbReference type="EMDB" id="EMD-34127"/>
<dbReference type="EMDB" id="EMD-34132"/>
<dbReference type="EMDB" id="EMD-34133"/>
<dbReference type="EMDB" id="EMD-34134"/>
<dbReference type="EMDB" id="EMD-34135"/>
<dbReference type="EMDB" id="EMD-36576"/>
<dbReference type="SMR" id="P0DP04"/>
<dbReference type="FunCoup" id="P0DP04">
    <property type="interactions" value="352"/>
</dbReference>
<dbReference type="STRING" id="9606.ENSP00000481152"/>
<dbReference type="IMGT_GENE-DB" id="IGHV3-43D"/>
<dbReference type="BioMuta" id="HGNC:50322"/>
<dbReference type="jPOST" id="P0DP04"/>
<dbReference type="MassIVE" id="P0DP04"/>
<dbReference type="PaxDb" id="9606-ENSP00000481152"/>
<dbReference type="PeptideAtlas" id="P0DP04"/>
<dbReference type="GeneCards" id="IGHV3-43D"/>
<dbReference type="HGNC" id="HGNC:50322">
    <property type="gene designation" value="IGHV3-43D"/>
</dbReference>
<dbReference type="neXtProt" id="NX_P0DP04"/>
<dbReference type="eggNOG" id="ENOG502TE7T">
    <property type="taxonomic scope" value="Eukaryota"/>
</dbReference>
<dbReference type="InParanoid" id="P0DP04"/>
<dbReference type="PAN-GO" id="P0DP04">
    <property type="GO annotations" value="11 GO annotations based on evolutionary models"/>
</dbReference>
<dbReference type="Pharos" id="P0DP04">
    <property type="development level" value="Tdark"/>
</dbReference>
<dbReference type="PRO" id="PR:P0DP04"/>
<dbReference type="Proteomes" id="UP000005640">
    <property type="component" value="Unplaced"/>
</dbReference>
<dbReference type="RNAct" id="P0DP04">
    <property type="molecule type" value="protein"/>
</dbReference>
<dbReference type="GO" id="GO:0005576">
    <property type="term" value="C:extracellular region"/>
    <property type="evidence" value="ECO:0007669"/>
    <property type="project" value="UniProtKB-SubCell"/>
</dbReference>
<dbReference type="GO" id="GO:0019814">
    <property type="term" value="C:immunoglobulin complex"/>
    <property type="evidence" value="ECO:0007669"/>
    <property type="project" value="UniProtKB-KW"/>
</dbReference>
<dbReference type="GO" id="GO:0005886">
    <property type="term" value="C:plasma membrane"/>
    <property type="evidence" value="ECO:0007669"/>
    <property type="project" value="UniProtKB-SubCell"/>
</dbReference>
<dbReference type="GO" id="GO:0003823">
    <property type="term" value="F:antigen binding"/>
    <property type="evidence" value="ECO:0000318"/>
    <property type="project" value="GO_Central"/>
</dbReference>
<dbReference type="GO" id="GO:0016064">
    <property type="term" value="P:immunoglobulin mediated immune response"/>
    <property type="evidence" value="ECO:0000318"/>
    <property type="project" value="GO_Central"/>
</dbReference>
<dbReference type="CDD" id="cd04981">
    <property type="entry name" value="IgV_H"/>
    <property type="match status" value="1"/>
</dbReference>
<dbReference type="FunFam" id="2.60.40.10:FF:000942">
    <property type="entry name" value="Immunoglobulin heavy variable 3-23"/>
    <property type="match status" value="1"/>
</dbReference>
<dbReference type="Gene3D" id="2.60.40.10">
    <property type="entry name" value="Immunoglobulins"/>
    <property type="match status" value="1"/>
</dbReference>
<dbReference type="InterPro" id="IPR007110">
    <property type="entry name" value="Ig-like_dom"/>
</dbReference>
<dbReference type="InterPro" id="IPR036179">
    <property type="entry name" value="Ig-like_dom_sf"/>
</dbReference>
<dbReference type="InterPro" id="IPR013783">
    <property type="entry name" value="Ig-like_fold"/>
</dbReference>
<dbReference type="InterPro" id="IPR013106">
    <property type="entry name" value="Ig_V-set"/>
</dbReference>
<dbReference type="InterPro" id="IPR050199">
    <property type="entry name" value="IgHV"/>
</dbReference>
<dbReference type="PANTHER" id="PTHR23266">
    <property type="entry name" value="IMMUNOGLOBULIN HEAVY CHAIN"/>
    <property type="match status" value="1"/>
</dbReference>
<dbReference type="Pfam" id="PF07686">
    <property type="entry name" value="V-set"/>
    <property type="match status" value="1"/>
</dbReference>
<dbReference type="SMART" id="SM00406">
    <property type="entry name" value="IGv"/>
    <property type="match status" value="1"/>
</dbReference>
<dbReference type="SUPFAM" id="SSF48726">
    <property type="entry name" value="Immunoglobulin"/>
    <property type="match status" value="1"/>
</dbReference>
<dbReference type="PROSITE" id="PS50835">
    <property type="entry name" value="IG_LIKE"/>
    <property type="match status" value="1"/>
</dbReference>